<reference key="1">
    <citation type="journal article" date="2005" name="Science">
        <title>The transcriptional landscape of the mammalian genome.</title>
        <authorList>
            <person name="Carninci P."/>
            <person name="Kasukawa T."/>
            <person name="Katayama S."/>
            <person name="Gough J."/>
            <person name="Frith M.C."/>
            <person name="Maeda N."/>
            <person name="Oyama R."/>
            <person name="Ravasi T."/>
            <person name="Lenhard B."/>
            <person name="Wells C."/>
            <person name="Kodzius R."/>
            <person name="Shimokawa K."/>
            <person name="Bajic V.B."/>
            <person name="Brenner S.E."/>
            <person name="Batalov S."/>
            <person name="Forrest A.R."/>
            <person name="Zavolan M."/>
            <person name="Davis M.J."/>
            <person name="Wilming L.G."/>
            <person name="Aidinis V."/>
            <person name="Allen J.E."/>
            <person name="Ambesi-Impiombato A."/>
            <person name="Apweiler R."/>
            <person name="Aturaliya R.N."/>
            <person name="Bailey T.L."/>
            <person name="Bansal M."/>
            <person name="Baxter L."/>
            <person name="Beisel K.W."/>
            <person name="Bersano T."/>
            <person name="Bono H."/>
            <person name="Chalk A.M."/>
            <person name="Chiu K.P."/>
            <person name="Choudhary V."/>
            <person name="Christoffels A."/>
            <person name="Clutterbuck D.R."/>
            <person name="Crowe M.L."/>
            <person name="Dalla E."/>
            <person name="Dalrymple B.P."/>
            <person name="de Bono B."/>
            <person name="Della Gatta G."/>
            <person name="di Bernardo D."/>
            <person name="Down T."/>
            <person name="Engstrom P."/>
            <person name="Fagiolini M."/>
            <person name="Faulkner G."/>
            <person name="Fletcher C.F."/>
            <person name="Fukushima T."/>
            <person name="Furuno M."/>
            <person name="Futaki S."/>
            <person name="Gariboldi M."/>
            <person name="Georgii-Hemming P."/>
            <person name="Gingeras T.R."/>
            <person name="Gojobori T."/>
            <person name="Green R.E."/>
            <person name="Gustincich S."/>
            <person name="Harbers M."/>
            <person name="Hayashi Y."/>
            <person name="Hensch T.K."/>
            <person name="Hirokawa N."/>
            <person name="Hill D."/>
            <person name="Huminiecki L."/>
            <person name="Iacono M."/>
            <person name="Ikeo K."/>
            <person name="Iwama A."/>
            <person name="Ishikawa T."/>
            <person name="Jakt M."/>
            <person name="Kanapin A."/>
            <person name="Katoh M."/>
            <person name="Kawasawa Y."/>
            <person name="Kelso J."/>
            <person name="Kitamura H."/>
            <person name="Kitano H."/>
            <person name="Kollias G."/>
            <person name="Krishnan S.P."/>
            <person name="Kruger A."/>
            <person name="Kummerfeld S.K."/>
            <person name="Kurochkin I.V."/>
            <person name="Lareau L.F."/>
            <person name="Lazarevic D."/>
            <person name="Lipovich L."/>
            <person name="Liu J."/>
            <person name="Liuni S."/>
            <person name="McWilliam S."/>
            <person name="Madan Babu M."/>
            <person name="Madera M."/>
            <person name="Marchionni L."/>
            <person name="Matsuda H."/>
            <person name="Matsuzawa S."/>
            <person name="Miki H."/>
            <person name="Mignone F."/>
            <person name="Miyake S."/>
            <person name="Morris K."/>
            <person name="Mottagui-Tabar S."/>
            <person name="Mulder N."/>
            <person name="Nakano N."/>
            <person name="Nakauchi H."/>
            <person name="Ng P."/>
            <person name="Nilsson R."/>
            <person name="Nishiguchi S."/>
            <person name="Nishikawa S."/>
            <person name="Nori F."/>
            <person name="Ohara O."/>
            <person name="Okazaki Y."/>
            <person name="Orlando V."/>
            <person name="Pang K.C."/>
            <person name="Pavan W.J."/>
            <person name="Pavesi G."/>
            <person name="Pesole G."/>
            <person name="Petrovsky N."/>
            <person name="Piazza S."/>
            <person name="Reed J."/>
            <person name="Reid J.F."/>
            <person name="Ring B.Z."/>
            <person name="Ringwald M."/>
            <person name="Rost B."/>
            <person name="Ruan Y."/>
            <person name="Salzberg S.L."/>
            <person name="Sandelin A."/>
            <person name="Schneider C."/>
            <person name="Schoenbach C."/>
            <person name="Sekiguchi K."/>
            <person name="Semple C.A."/>
            <person name="Seno S."/>
            <person name="Sessa L."/>
            <person name="Sheng Y."/>
            <person name="Shibata Y."/>
            <person name="Shimada H."/>
            <person name="Shimada K."/>
            <person name="Silva D."/>
            <person name="Sinclair B."/>
            <person name="Sperling S."/>
            <person name="Stupka E."/>
            <person name="Sugiura K."/>
            <person name="Sultana R."/>
            <person name="Takenaka Y."/>
            <person name="Taki K."/>
            <person name="Tammoja K."/>
            <person name="Tan S.L."/>
            <person name="Tang S."/>
            <person name="Taylor M.S."/>
            <person name="Tegner J."/>
            <person name="Teichmann S.A."/>
            <person name="Ueda H.R."/>
            <person name="van Nimwegen E."/>
            <person name="Verardo R."/>
            <person name="Wei C.L."/>
            <person name="Yagi K."/>
            <person name="Yamanishi H."/>
            <person name="Zabarovsky E."/>
            <person name="Zhu S."/>
            <person name="Zimmer A."/>
            <person name="Hide W."/>
            <person name="Bult C."/>
            <person name="Grimmond S.M."/>
            <person name="Teasdale R.D."/>
            <person name="Liu E.T."/>
            <person name="Brusic V."/>
            <person name="Quackenbush J."/>
            <person name="Wahlestedt C."/>
            <person name="Mattick J.S."/>
            <person name="Hume D.A."/>
            <person name="Kai C."/>
            <person name="Sasaki D."/>
            <person name="Tomaru Y."/>
            <person name="Fukuda S."/>
            <person name="Kanamori-Katayama M."/>
            <person name="Suzuki M."/>
            <person name="Aoki J."/>
            <person name="Arakawa T."/>
            <person name="Iida J."/>
            <person name="Imamura K."/>
            <person name="Itoh M."/>
            <person name="Kato T."/>
            <person name="Kawaji H."/>
            <person name="Kawagashira N."/>
            <person name="Kawashima T."/>
            <person name="Kojima M."/>
            <person name="Kondo S."/>
            <person name="Konno H."/>
            <person name="Nakano K."/>
            <person name="Ninomiya N."/>
            <person name="Nishio T."/>
            <person name="Okada M."/>
            <person name="Plessy C."/>
            <person name="Shibata K."/>
            <person name="Shiraki T."/>
            <person name="Suzuki S."/>
            <person name="Tagami M."/>
            <person name="Waki K."/>
            <person name="Watahiki A."/>
            <person name="Okamura-Oho Y."/>
            <person name="Suzuki H."/>
            <person name="Kawai J."/>
            <person name="Hayashizaki Y."/>
        </authorList>
    </citation>
    <scope>NUCLEOTIDE SEQUENCE [LARGE SCALE MRNA] (ISOFORM 1)</scope>
    <source>
        <strain>C57BL/6J</strain>
        <tissue>Bone marrow</tissue>
        <tissue>Embryonic stem cell</tissue>
        <tissue>Placenta</tissue>
    </source>
</reference>
<reference key="2">
    <citation type="journal article" date="2004" name="Genome Res.">
        <title>The status, quality, and expansion of the NIH full-length cDNA project: the Mammalian Gene Collection (MGC).</title>
        <authorList>
            <consortium name="The MGC Project Team"/>
        </authorList>
    </citation>
    <scope>NUCLEOTIDE SEQUENCE [LARGE SCALE MRNA] (ISOFORMS 1 AND 2)</scope>
    <source>
        <strain>FVB/N</strain>
        <tissue>Brain</tissue>
        <tissue>Embryo</tissue>
        <tissue>Mammary tumor</tissue>
    </source>
</reference>
<reference key="3">
    <citation type="journal article" date="2010" name="Cell">
        <title>A tissue-specific atlas of mouse protein phosphorylation and expression.</title>
        <authorList>
            <person name="Huttlin E.L."/>
            <person name="Jedrychowski M.P."/>
            <person name="Elias J.E."/>
            <person name="Goswami T."/>
            <person name="Rad R."/>
            <person name="Beausoleil S.A."/>
            <person name="Villen J."/>
            <person name="Haas W."/>
            <person name="Sowa M.E."/>
            <person name="Gygi S.P."/>
        </authorList>
    </citation>
    <scope>IDENTIFICATION BY MASS SPECTROMETRY [LARGE SCALE ANALYSIS]</scope>
    <source>
        <tissue>Brain</tissue>
        <tissue>Brown adipose tissue</tissue>
        <tissue>Heart</tissue>
        <tissue>Kidney</tissue>
        <tissue>Liver</tissue>
        <tissue>Lung</tissue>
        <tissue>Pancreas</tissue>
        <tissue>Spleen</tissue>
        <tissue>Testis</tissue>
    </source>
</reference>
<keyword id="KW-0025">Alternative splicing</keyword>
<keyword id="KW-0963">Cytoplasm</keyword>
<keyword id="KW-1185">Reference proteome</keyword>
<keyword id="KW-0677">Repeat</keyword>
<keyword id="KW-0802">TPR repeat</keyword>
<proteinExistence type="evidence at protein level"/>
<gene>
    <name type="primary">Naa25</name>
    <name type="synonym">Mdm20</name>
</gene>
<feature type="chain" id="PRO_0000294338" description="N-alpha-acetyltransferase 25, NatB auxiliary subunit">
    <location>
        <begin position="1"/>
        <end position="972"/>
    </location>
</feature>
<feature type="repeat" description="TPR 1">
    <location>
        <begin position="11"/>
        <end position="44"/>
    </location>
</feature>
<feature type="repeat" description="TPR 2">
    <location>
        <begin position="45"/>
        <end position="78"/>
    </location>
</feature>
<feature type="repeat" description="TPR 3">
    <location>
        <begin position="79"/>
        <end position="112"/>
    </location>
</feature>
<feature type="repeat" description="TPR 4">
    <location>
        <begin position="114"/>
        <end position="146"/>
    </location>
</feature>
<feature type="splice variant" id="VSP_026631" description="In isoform 2." evidence="2">
    <original>MATRGHVQDPNDRRLRPIYDYLDNGNNKMAIQQADKLLKKHKDLHCAK</original>
    <variation>MCRTLTTGASGPFT</variation>
    <location>
        <begin position="1"/>
        <end position="48"/>
    </location>
</feature>
<feature type="sequence conflict" description="In Ref. 1; BAE39569/BAE39494." evidence="3" ref="1">
    <original>L</original>
    <variation>I</variation>
    <location>
        <position position="424"/>
    </location>
</feature>
<comment type="function">
    <text evidence="1">Non-catalytic subunit of the NatB complex which catalyzes acetylation of the N-terminal methionine residues of peptides beginning with Met-Asp, Met-Glu, Met-Asn and Met-Gln. May play a role in normal cell-cycle progression.</text>
</comment>
<comment type="subunit">
    <text evidence="1">Component of the N-terminal acetyltransferase B (NatB) complex which is composed of NAA20 and NAA25.</text>
</comment>
<comment type="subcellular location">
    <subcellularLocation>
        <location evidence="1">Cytoplasm</location>
    </subcellularLocation>
</comment>
<comment type="alternative products">
    <event type="alternative splicing"/>
    <isoform>
        <id>Q8BWZ3-1</id>
        <name>1</name>
        <sequence type="displayed"/>
    </isoform>
    <isoform>
        <id>Q8BWZ3-2</id>
        <name>2</name>
        <sequence type="described" ref="VSP_026631"/>
    </isoform>
</comment>
<comment type="similarity">
    <text evidence="3">Belongs to the MDM20/NAA25 family.</text>
</comment>
<dbReference type="EMBL" id="AK049325">
    <property type="protein sequence ID" value="BAC33684.1"/>
    <property type="molecule type" value="mRNA"/>
</dbReference>
<dbReference type="EMBL" id="AK149758">
    <property type="protein sequence ID" value="BAE29066.1"/>
    <property type="molecule type" value="mRNA"/>
</dbReference>
<dbReference type="EMBL" id="AK167405">
    <property type="protein sequence ID" value="BAE39494.1"/>
    <property type="molecule type" value="mRNA"/>
</dbReference>
<dbReference type="EMBL" id="AK167491">
    <property type="protein sequence ID" value="BAE39569.1"/>
    <property type="molecule type" value="mRNA"/>
</dbReference>
<dbReference type="EMBL" id="BC028868">
    <property type="protein sequence ID" value="AAH28868.1"/>
    <property type="molecule type" value="mRNA"/>
</dbReference>
<dbReference type="EMBL" id="BC055480">
    <property type="protein sequence ID" value="AAH55480.1"/>
    <property type="molecule type" value="mRNA"/>
</dbReference>
<dbReference type="EMBL" id="BC106182">
    <property type="protein sequence ID" value="AAI06183.1"/>
    <property type="molecule type" value="mRNA"/>
</dbReference>
<dbReference type="EMBL" id="BC132172">
    <property type="protein sequence ID" value="AAI32173.1"/>
    <property type="molecule type" value="mRNA"/>
</dbReference>
<dbReference type="CCDS" id="CCDS19633.1">
    <molecule id="Q8BWZ3-1"/>
</dbReference>
<dbReference type="RefSeq" id="NP_766310.2">
    <molecule id="Q8BWZ3-1"/>
    <property type="nucleotide sequence ID" value="NM_172722.4"/>
</dbReference>
<dbReference type="SMR" id="Q8BWZ3"/>
<dbReference type="BioGRID" id="231159">
    <property type="interactions" value="3"/>
</dbReference>
<dbReference type="FunCoup" id="Q8BWZ3">
    <property type="interactions" value="4558"/>
</dbReference>
<dbReference type="IntAct" id="Q8BWZ3">
    <property type="interactions" value="1"/>
</dbReference>
<dbReference type="STRING" id="10090.ENSMUSP00000038977"/>
<dbReference type="iPTMnet" id="Q8BWZ3"/>
<dbReference type="PhosphoSitePlus" id="Q8BWZ3"/>
<dbReference type="SwissPalm" id="Q8BWZ3"/>
<dbReference type="PaxDb" id="10090-ENSMUSP00000038977"/>
<dbReference type="PeptideAtlas" id="Q8BWZ3"/>
<dbReference type="ProteomicsDB" id="286137">
    <molecule id="Q8BWZ3-1"/>
</dbReference>
<dbReference type="ProteomicsDB" id="286138">
    <molecule id="Q8BWZ3-2"/>
</dbReference>
<dbReference type="Pumba" id="Q8BWZ3"/>
<dbReference type="Antibodypedia" id="50891">
    <property type="antibodies" value="113 antibodies from 20 providers"/>
</dbReference>
<dbReference type="DNASU" id="231713"/>
<dbReference type="Ensembl" id="ENSMUST00000042163.15">
    <molecule id="Q8BWZ3-1"/>
    <property type="protein sequence ID" value="ENSMUSP00000038977.9"/>
    <property type="gene ID" value="ENSMUSG00000042719.18"/>
</dbReference>
<dbReference type="GeneID" id="231713"/>
<dbReference type="KEGG" id="mmu:231713"/>
<dbReference type="UCSC" id="uc008zjb.1">
    <molecule id="Q8BWZ3-2"/>
    <property type="organism name" value="mouse"/>
</dbReference>
<dbReference type="UCSC" id="uc008zjc.1">
    <molecule id="Q8BWZ3-1"/>
    <property type="organism name" value="mouse"/>
</dbReference>
<dbReference type="AGR" id="MGI:2442563"/>
<dbReference type="CTD" id="80018"/>
<dbReference type="MGI" id="MGI:2442563">
    <property type="gene designation" value="Naa25"/>
</dbReference>
<dbReference type="VEuPathDB" id="HostDB:ENSMUSG00000042719"/>
<dbReference type="eggNOG" id="KOG2053">
    <property type="taxonomic scope" value="Eukaryota"/>
</dbReference>
<dbReference type="GeneTree" id="ENSGT00950000183174"/>
<dbReference type="HOGENOM" id="CLU_008075_0_0_1"/>
<dbReference type="InParanoid" id="Q8BWZ3"/>
<dbReference type="OMA" id="WKRREHQ"/>
<dbReference type="OrthoDB" id="1874341at2759"/>
<dbReference type="PhylomeDB" id="Q8BWZ3"/>
<dbReference type="TreeFam" id="TF315103"/>
<dbReference type="BRENDA" id="2.3.1.254">
    <property type="organism ID" value="3474"/>
</dbReference>
<dbReference type="BioGRID-ORCS" id="231713">
    <property type="hits" value="27 hits in 74 CRISPR screens"/>
</dbReference>
<dbReference type="ChiTaRS" id="Naa25">
    <property type="organism name" value="mouse"/>
</dbReference>
<dbReference type="PRO" id="PR:Q8BWZ3"/>
<dbReference type="Proteomes" id="UP000000589">
    <property type="component" value="Chromosome 5"/>
</dbReference>
<dbReference type="RNAct" id="Q8BWZ3">
    <property type="molecule type" value="protein"/>
</dbReference>
<dbReference type="Bgee" id="ENSMUSG00000042719">
    <property type="expression patterns" value="Expressed in spermatid and 231 other cell types or tissues"/>
</dbReference>
<dbReference type="ExpressionAtlas" id="Q8BWZ3">
    <property type="expression patterns" value="baseline and differential"/>
</dbReference>
<dbReference type="GO" id="GO:0005737">
    <property type="term" value="C:cytoplasm"/>
    <property type="evidence" value="ECO:0000266"/>
    <property type="project" value="MGI"/>
</dbReference>
<dbReference type="GO" id="GO:0005829">
    <property type="term" value="C:cytosol"/>
    <property type="evidence" value="ECO:0007669"/>
    <property type="project" value="Ensembl"/>
</dbReference>
<dbReference type="GO" id="GO:0005794">
    <property type="term" value="C:Golgi apparatus"/>
    <property type="evidence" value="ECO:0007669"/>
    <property type="project" value="Ensembl"/>
</dbReference>
<dbReference type="GO" id="GO:0031416">
    <property type="term" value="C:NatB complex"/>
    <property type="evidence" value="ECO:0007669"/>
    <property type="project" value="Ensembl"/>
</dbReference>
<dbReference type="FunFam" id="1.25.40.1040:FF:000004">
    <property type="entry name" value="N-alpha-acetyltransferase 25, NatB auxiliary subunit"/>
    <property type="match status" value="1"/>
</dbReference>
<dbReference type="Gene3D" id="1.25.40.1040">
    <property type="match status" value="1"/>
</dbReference>
<dbReference type="InterPro" id="IPR019183">
    <property type="entry name" value="NAA25_NatB_aux_su"/>
</dbReference>
<dbReference type="InterPro" id="IPR011990">
    <property type="entry name" value="TPR-like_helical_dom_sf"/>
</dbReference>
<dbReference type="PANTHER" id="PTHR22767:SF3">
    <property type="entry name" value="N-ALPHA-ACETYLTRANSFERASE 25, NATB AUXILIARY SUBUNIT"/>
    <property type="match status" value="1"/>
</dbReference>
<dbReference type="PANTHER" id="PTHR22767">
    <property type="entry name" value="N-TERMINAL ACETYLTRANSFERASE-RELATED"/>
    <property type="match status" value="1"/>
</dbReference>
<dbReference type="Pfam" id="PF09797">
    <property type="entry name" value="NatB_MDM20"/>
    <property type="match status" value="1"/>
</dbReference>
<dbReference type="SUPFAM" id="SSF48452">
    <property type="entry name" value="TPR-like"/>
    <property type="match status" value="1"/>
</dbReference>
<dbReference type="PROSITE" id="PS50293">
    <property type="entry name" value="TPR_REGION"/>
    <property type="match status" value="1"/>
</dbReference>
<name>NAA25_MOUSE</name>
<evidence type="ECO:0000250" key="1">
    <source>
        <dbReference type="UniProtKB" id="Q14CX7"/>
    </source>
</evidence>
<evidence type="ECO:0000303" key="2">
    <source>
    </source>
</evidence>
<evidence type="ECO:0000305" key="3"/>
<organism>
    <name type="scientific">Mus musculus</name>
    <name type="common">Mouse</name>
    <dbReference type="NCBI Taxonomy" id="10090"/>
    <lineage>
        <taxon>Eukaryota</taxon>
        <taxon>Metazoa</taxon>
        <taxon>Chordata</taxon>
        <taxon>Craniata</taxon>
        <taxon>Vertebrata</taxon>
        <taxon>Euteleostomi</taxon>
        <taxon>Mammalia</taxon>
        <taxon>Eutheria</taxon>
        <taxon>Euarchontoglires</taxon>
        <taxon>Glires</taxon>
        <taxon>Rodentia</taxon>
        <taxon>Myomorpha</taxon>
        <taxon>Muroidea</taxon>
        <taxon>Muridae</taxon>
        <taxon>Murinae</taxon>
        <taxon>Mus</taxon>
        <taxon>Mus</taxon>
    </lineage>
</organism>
<protein>
    <recommendedName>
        <fullName>N-alpha-acetyltransferase 25, NatB auxiliary subunit</fullName>
    </recommendedName>
    <alternativeName>
        <fullName>Mitochondrial distribution and morphology protein 20</fullName>
    </alternativeName>
    <alternativeName>
        <fullName>N-terminal acetyltransferase B complex subunit MDM20</fullName>
        <shortName>NatB complex subunit MDM20</shortName>
    </alternativeName>
    <alternativeName>
        <fullName>N-terminal acetyltransferase B complex subunit NAA25</fullName>
    </alternativeName>
</protein>
<accession>Q8BWZ3</accession>
<accession>A1A4B7</accession>
<accession>Q3KQI7</accession>
<accession>Q3TJC6</accession>
<accession>Q7TMM2</accession>
<sequence length="972" mass="111708">MATRGHVQDPNDRRLRPIYDYLDNGNNKMAIQQADKLLKKHKDLHCAKVLKAIGLQRTGKQEEAFTLAQEVAALEPTDDNSLQALTILYREMHRPELVTKLYEAAVKKVPNSEEYHSHLFMAYARVGEYKKMQQAGMALYKIVPKNPYYFWSVMSLIMQSISARDENLSKTMFLPLAERMVEKMVKEDKIEAEAEVELYYMILERLGKYQEALDVIRGKLGEKLTSEIQSRENKCMAMYKKLSKWPECNALSRRLLLKNSDDWQFYLTYFDSVFRLIEEAWTPPAEGEHSLEGEVHCSAEDAVKFIEDRITEASQSSRHVRGPHLAKLELIRRLRSQGCNDEYKLGDPEELMFQYFKKFGDKPCCFTDLKVFVDLLPAAQCTQFINQLLGVVPLSTPTEDKLALPADIRGLQQHLCVVQLTRLLGLYHSMDKSQKLDVVKELMLRYQHGLEFGRSCLKTELQFSDYYCLLAVHVLIDVWREAGEETAVWQALTLLEEGLTHSPSNAQFKLLLVRIYCVLGAFEPVVDLYSSLDAKHIQHDTIGYLLTRYAASLGQYAAASQSCNFALRFFHSNQKDTSEYIIQAYKYGAFEKIPEFIAFRNRLNNSLHFAQVRTERMLLDLLLEANISISLAESIKSMNLRPEEDDVPWEDLRDNRDLDVFFSWDPKDRNVSEEHKKLSLEEETMWLRIRSLTLRLISGLPSLTHPVEPKNSEKMSENGVSSRIDILRLLLQQLEVAVETGKRFIEKEIQYPFLGPVPTRMGRFFSSGCCQCQVQSFHLVSDMYELDTSGLEGTVDIQERIENSLASLLELLKGVFSTCKGDLLEVTDGNVKTQPAVLENLVFFVETISVILWVSSYCESVLRPYKLNIQKKKKKKKETSIIMPPIFTSFQDYVTGLQTVISNAVDHIKGLEAHLIALRLEELTLEETSISTEERKFSKTVQGKVQSSYLHSLLETGELLRKRLETTKKLKI</sequence>